<proteinExistence type="inferred from homology"/>
<organism>
    <name type="scientific">Yersinia pseudotuberculosis serotype I (strain IP32953)</name>
    <dbReference type="NCBI Taxonomy" id="273123"/>
    <lineage>
        <taxon>Bacteria</taxon>
        <taxon>Pseudomonadati</taxon>
        <taxon>Pseudomonadota</taxon>
        <taxon>Gammaproteobacteria</taxon>
        <taxon>Enterobacterales</taxon>
        <taxon>Yersiniaceae</taxon>
        <taxon>Yersinia</taxon>
    </lineage>
</organism>
<keyword id="KW-0963">Cytoplasm</keyword>
<keyword id="KW-0227">DNA damage</keyword>
<keyword id="KW-0234">DNA repair</keyword>
<keyword id="KW-0235">DNA replication</keyword>
<keyword id="KW-0238">DNA-binding</keyword>
<keyword id="KW-0239">DNA-directed DNA polymerase</keyword>
<keyword id="KW-0460">Magnesium</keyword>
<keyword id="KW-0479">Metal-binding</keyword>
<keyword id="KW-0515">Mutator protein</keyword>
<keyword id="KW-0548">Nucleotidyltransferase</keyword>
<keyword id="KW-0808">Transferase</keyword>
<name>DPO4_YERPS</name>
<reference key="1">
    <citation type="journal article" date="2004" name="Proc. Natl. Acad. Sci. U.S.A.">
        <title>Insights into the evolution of Yersinia pestis through whole-genome comparison with Yersinia pseudotuberculosis.</title>
        <authorList>
            <person name="Chain P.S.G."/>
            <person name="Carniel E."/>
            <person name="Larimer F.W."/>
            <person name="Lamerdin J."/>
            <person name="Stoutland P.O."/>
            <person name="Regala W.M."/>
            <person name="Georgescu A.M."/>
            <person name="Vergez L.M."/>
            <person name="Land M.L."/>
            <person name="Motin V.L."/>
            <person name="Brubaker R.R."/>
            <person name="Fowler J."/>
            <person name="Hinnebusch J."/>
            <person name="Marceau M."/>
            <person name="Medigue C."/>
            <person name="Simonet M."/>
            <person name="Chenal-Francisque V."/>
            <person name="Souza B."/>
            <person name="Dacheux D."/>
            <person name="Elliott J.M."/>
            <person name="Derbise A."/>
            <person name="Hauser L.J."/>
            <person name="Garcia E."/>
        </authorList>
    </citation>
    <scope>NUCLEOTIDE SEQUENCE [LARGE SCALE GENOMIC DNA]</scope>
    <source>
        <strain>IP32953</strain>
    </source>
</reference>
<gene>
    <name evidence="1" type="primary">dinB</name>
    <name type="ordered locus">YPTB0896</name>
</gene>
<dbReference type="EC" id="2.7.7.7" evidence="1"/>
<dbReference type="EMBL" id="BX936398">
    <property type="protein sequence ID" value="CAH20136.1"/>
    <property type="molecule type" value="Genomic_DNA"/>
</dbReference>
<dbReference type="RefSeq" id="WP_011191844.1">
    <property type="nucleotide sequence ID" value="NC_006155.1"/>
</dbReference>
<dbReference type="SMR" id="Q66DZ7"/>
<dbReference type="GeneID" id="49787049"/>
<dbReference type="KEGG" id="ypo:BZ17_1650"/>
<dbReference type="KEGG" id="yps:YPTB0896"/>
<dbReference type="PATRIC" id="fig|273123.14.peg.1754"/>
<dbReference type="Proteomes" id="UP000001011">
    <property type="component" value="Chromosome"/>
</dbReference>
<dbReference type="GO" id="GO:0005829">
    <property type="term" value="C:cytosol"/>
    <property type="evidence" value="ECO:0007669"/>
    <property type="project" value="TreeGrafter"/>
</dbReference>
<dbReference type="GO" id="GO:0003684">
    <property type="term" value="F:damaged DNA binding"/>
    <property type="evidence" value="ECO:0007669"/>
    <property type="project" value="InterPro"/>
</dbReference>
<dbReference type="GO" id="GO:0003887">
    <property type="term" value="F:DNA-directed DNA polymerase activity"/>
    <property type="evidence" value="ECO:0007669"/>
    <property type="project" value="UniProtKB-UniRule"/>
</dbReference>
<dbReference type="GO" id="GO:0000287">
    <property type="term" value="F:magnesium ion binding"/>
    <property type="evidence" value="ECO:0007669"/>
    <property type="project" value="UniProtKB-UniRule"/>
</dbReference>
<dbReference type="GO" id="GO:0006261">
    <property type="term" value="P:DNA-templated DNA replication"/>
    <property type="evidence" value="ECO:0007669"/>
    <property type="project" value="UniProtKB-UniRule"/>
</dbReference>
<dbReference type="GO" id="GO:0042276">
    <property type="term" value="P:error-prone translesion synthesis"/>
    <property type="evidence" value="ECO:0007669"/>
    <property type="project" value="TreeGrafter"/>
</dbReference>
<dbReference type="GO" id="GO:0009432">
    <property type="term" value="P:SOS response"/>
    <property type="evidence" value="ECO:0007669"/>
    <property type="project" value="TreeGrafter"/>
</dbReference>
<dbReference type="CDD" id="cd03586">
    <property type="entry name" value="PolY_Pol_IV_kappa"/>
    <property type="match status" value="1"/>
</dbReference>
<dbReference type="FunFam" id="1.10.150.20:FF:000019">
    <property type="entry name" value="DNA polymerase IV"/>
    <property type="match status" value="1"/>
</dbReference>
<dbReference type="FunFam" id="3.30.1490.100:FF:000002">
    <property type="entry name" value="DNA polymerase IV"/>
    <property type="match status" value="1"/>
</dbReference>
<dbReference type="FunFam" id="3.30.70.270:FF:000002">
    <property type="entry name" value="DNA polymerase IV"/>
    <property type="match status" value="1"/>
</dbReference>
<dbReference type="FunFam" id="3.40.1170.60:FF:000001">
    <property type="entry name" value="DNA polymerase IV"/>
    <property type="match status" value="1"/>
</dbReference>
<dbReference type="Gene3D" id="3.30.70.270">
    <property type="match status" value="1"/>
</dbReference>
<dbReference type="Gene3D" id="3.40.1170.60">
    <property type="match status" value="1"/>
</dbReference>
<dbReference type="Gene3D" id="1.10.150.20">
    <property type="entry name" value="5' to 3' exonuclease, C-terminal subdomain"/>
    <property type="match status" value="1"/>
</dbReference>
<dbReference type="Gene3D" id="3.30.1490.100">
    <property type="entry name" value="DNA polymerase, Y-family, little finger domain"/>
    <property type="match status" value="1"/>
</dbReference>
<dbReference type="HAMAP" id="MF_01113">
    <property type="entry name" value="DNApol_IV"/>
    <property type="match status" value="1"/>
</dbReference>
<dbReference type="InterPro" id="IPR043502">
    <property type="entry name" value="DNA/RNA_pol_sf"/>
</dbReference>
<dbReference type="InterPro" id="IPR036775">
    <property type="entry name" value="DNA_pol_Y-fam_lit_finger_sf"/>
</dbReference>
<dbReference type="InterPro" id="IPR017961">
    <property type="entry name" value="DNA_pol_Y-fam_little_finger"/>
</dbReference>
<dbReference type="InterPro" id="IPR050116">
    <property type="entry name" value="DNA_polymerase-Y"/>
</dbReference>
<dbReference type="InterPro" id="IPR022880">
    <property type="entry name" value="DNApol_IV"/>
</dbReference>
<dbReference type="InterPro" id="IPR053848">
    <property type="entry name" value="IMS_HHH_1"/>
</dbReference>
<dbReference type="InterPro" id="IPR043128">
    <property type="entry name" value="Rev_trsase/Diguanyl_cyclase"/>
</dbReference>
<dbReference type="InterPro" id="IPR001126">
    <property type="entry name" value="UmuC"/>
</dbReference>
<dbReference type="NCBIfam" id="NF002677">
    <property type="entry name" value="PRK02406.1"/>
    <property type="match status" value="1"/>
</dbReference>
<dbReference type="PANTHER" id="PTHR11076:SF33">
    <property type="entry name" value="DNA POLYMERASE KAPPA"/>
    <property type="match status" value="1"/>
</dbReference>
<dbReference type="PANTHER" id="PTHR11076">
    <property type="entry name" value="DNA REPAIR POLYMERASE UMUC / TRANSFERASE FAMILY MEMBER"/>
    <property type="match status" value="1"/>
</dbReference>
<dbReference type="Pfam" id="PF00817">
    <property type="entry name" value="IMS"/>
    <property type="match status" value="1"/>
</dbReference>
<dbReference type="Pfam" id="PF11799">
    <property type="entry name" value="IMS_C"/>
    <property type="match status" value="1"/>
</dbReference>
<dbReference type="Pfam" id="PF21999">
    <property type="entry name" value="IMS_HHH_1"/>
    <property type="match status" value="1"/>
</dbReference>
<dbReference type="SUPFAM" id="SSF56672">
    <property type="entry name" value="DNA/RNA polymerases"/>
    <property type="match status" value="1"/>
</dbReference>
<dbReference type="SUPFAM" id="SSF100879">
    <property type="entry name" value="Lesion bypass DNA polymerase (Y-family), little finger domain"/>
    <property type="match status" value="1"/>
</dbReference>
<dbReference type="PROSITE" id="PS50173">
    <property type="entry name" value="UMUC"/>
    <property type="match status" value="1"/>
</dbReference>
<accession>Q66DZ7</accession>
<evidence type="ECO:0000255" key="1">
    <source>
        <dbReference type="HAMAP-Rule" id="MF_01113"/>
    </source>
</evidence>
<feature type="chain" id="PRO_1000084976" description="DNA polymerase IV">
    <location>
        <begin position="1"/>
        <end position="352"/>
    </location>
</feature>
<feature type="domain" description="UmuC" evidence="1">
    <location>
        <begin position="4"/>
        <end position="185"/>
    </location>
</feature>
<feature type="active site" evidence="1">
    <location>
        <position position="104"/>
    </location>
</feature>
<feature type="binding site" evidence="1">
    <location>
        <position position="8"/>
    </location>
    <ligand>
        <name>Mg(2+)</name>
        <dbReference type="ChEBI" id="CHEBI:18420"/>
    </ligand>
</feature>
<feature type="binding site" evidence="1">
    <location>
        <position position="103"/>
    </location>
    <ligand>
        <name>Mg(2+)</name>
        <dbReference type="ChEBI" id="CHEBI:18420"/>
    </ligand>
</feature>
<feature type="site" description="Substrate discrimination" evidence="1">
    <location>
        <position position="13"/>
    </location>
</feature>
<sequence length="352" mass="39647">MRKIIHVDMDCFFAAVEMRDDPRLRDIPLAIGGSKERRGVISTANYPARRYGVRSAMPTAMAFKLCPQLTLLPGRMAAYKEASQHIREIFARYTPLIEPLSLDEAYLDVSDSLACGGSATLIAQEIRQSIASELNLTASAGIAPIKFLAKIASELNKPNGQYVITPNQIQPFLQDLPLSKIPGVGAVTAKRLQALGLVTCGEIQKYPLAELLKHFGKFGRVLWERSHGIDEREISPDRLRKSVGVEKTLAEDIYDWESCEALIEELYLELETRLRKVKPDLHIARQGVKLKFHDFQQTTQEHTWPVLNKADLLQIAHAAWNERRAERGVRLVGLHVTLLDPQLERQLLLDWG</sequence>
<comment type="function">
    <text evidence="1">Poorly processive, error-prone DNA polymerase involved in untargeted mutagenesis. Copies undamaged DNA at stalled replication forks, which arise in vivo from mismatched or misaligned primer ends. These misaligned primers can be extended by PolIV. Exhibits no 3'-5' exonuclease (proofreading) activity. May be involved in translesional synthesis, in conjunction with the beta clamp from PolIII.</text>
</comment>
<comment type="catalytic activity">
    <reaction evidence="1">
        <text>DNA(n) + a 2'-deoxyribonucleoside 5'-triphosphate = DNA(n+1) + diphosphate</text>
        <dbReference type="Rhea" id="RHEA:22508"/>
        <dbReference type="Rhea" id="RHEA-COMP:17339"/>
        <dbReference type="Rhea" id="RHEA-COMP:17340"/>
        <dbReference type="ChEBI" id="CHEBI:33019"/>
        <dbReference type="ChEBI" id="CHEBI:61560"/>
        <dbReference type="ChEBI" id="CHEBI:173112"/>
        <dbReference type="EC" id="2.7.7.7"/>
    </reaction>
</comment>
<comment type="cofactor">
    <cofactor evidence="1">
        <name>Mg(2+)</name>
        <dbReference type="ChEBI" id="CHEBI:18420"/>
    </cofactor>
    <text evidence="1">Binds 2 magnesium ions per subunit.</text>
</comment>
<comment type="subunit">
    <text evidence="1">Monomer.</text>
</comment>
<comment type="subcellular location">
    <subcellularLocation>
        <location evidence="1">Cytoplasm</location>
    </subcellularLocation>
</comment>
<comment type="similarity">
    <text evidence="1">Belongs to the DNA polymerase type-Y family.</text>
</comment>
<protein>
    <recommendedName>
        <fullName evidence="1">DNA polymerase IV</fullName>
        <shortName evidence="1">Pol IV</shortName>
        <ecNumber evidence="1">2.7.7.7</ecNumber>
    </recommendedName>
</protein>